<gene>
    <name type="ORF">SPAC1F12.04c</name>
</gene>
<accession>Q10346</accession>
<proteinExistence type="predicted"/>
<reference key="1">
    <citation type="journal article" date="2002" name="Nature">
        <title>The genome sequence of Schizosaccharomyces pombe.</title>
        <authorList>
            <person name="Wood V."/>
            <person name="Gwilliam R."/>
            <person name="Rajandream M.A."/>
            <person name="Lyne M.H."/>
            <person name="Lyne R."/>
            <person name="Stewart A."/>
            <person name="Sgouros J.G."/>
            <person name="Peat N."/>
            <person name="Hayles J."/>
            <person name="Baker S.G."/>
            <person name="Basham D."/>
            <person name="Bowman S."/>
            <person name="Brooks K."/>
            <person name="Brown D."/>
            <person name="Brown S."/>
            <person name="Chillingworth T."/>
            <person name="Churcher C.M."/>
            <person name="Collins M."/>
            <person name="Connor R."/>
            <person name="Cronin A."/>
            <person name="Davis P."/>
            <person name="Feltwell T."/>
            <person name="Fraser A."/>
            <person name="Gentles S."/>
            <person name="Goble A."/>
            <person name="Hamlin N."/>
            <person name="Harris D.E."/>
            <person name="Hidalgo J."/>
            <person name="Hodgson G."/>
            <person name="Holroyd S."/>
            <person name="Hornsby T."/>
            <person name="Howarth S."/>
            <person name="Huckle E.J."/>
            <person name="Hunt S."/>
            <person name="Jagels K."/>
            <person name="James K.D."/>
            <person name="Jones L."/>
            <person name="Jones M."/>
            <person name="Leather S."/>
            <person name="McDonald S."/>
            <person name="McLean J."/>
            <person name="Mooney P."/>
            <person name="Moule S."/>
            <person name="Mungall K.L."/>
            <person name="Murphy L.D."/>
            <person name="Niblett D."/>
            <person name="Odell C."/>
            <person name="Oliver K."/>
            <person name="O'Neil S."/>
            <person name="Pearson D."/>
            <person name="Quail M.A."/>
            <person name="Rabbinowitsch E."/>
            <person name="Rutherford K.M."/>
            <person name="Rutter S."/>
            <person name="Saunders D."/>
            <person name="Seeger K."/>
            <person name="Sharp S."/>
            <person name="Skelton J."/>
            <person name="Simmonds M.N."/>
            <person name="Squares R."/>
            <person name="Squares S."/>
            <person name="Stevens K."/>
            <person name="Taylor K."/>
            <person name="Taylor R.G."/>
            <person name="Tivey A."/>
            <person name="Walsh S.V."/>
            <person name="Warren T."/>
            <person name="Whitehead S."/>
            <person name="Woodward J.R."/>
            <person name="Volckaert G."/>
            <person name="Aert R."/>
            <person name="Robben J."/>
            <person name="Grymonprez B."/>
            <person name="Weltjens I."/>
            <person name="Vanstreels E."/>
            <person name="Rieger M."/>
            <person name="Schaefer M."/>
            <person name="Mueller-Auer S."/>
            <person name="Gabel C."/>
            <person name="Fuchs M."/>
            <person name="Duesterhoeft A."/>
            <person name="Fritzc C."/>
            <person name="Holzer E."/>
            <person name="Moestl D."/>
            <person name="Hilbert H."/>
            <person name="Borzym K."/>
            <person name="Langer I."/>
            <person name="Beck A."/>
            <person name="Lehrach H."/>
            <person name="Reinhardt R."/>
            <person name="Pohl T.M."/>
            <person name="Eger P."/>
            <person name="Zimmermann W."/>
            <person name="Wedler H."/>
            <person name="Wambutt R."/>
            <person name="Purnelle B."/>
            <person name="Goffeau A."/>
            <person name="Cadieu E."/>
            <person name="Dreano S."/>
            <person name="Gloux S."/>
            <person name="Lelaure V."/>
            <person name="Mottier S."/>
            <person name="Galibert F."/>
            <person name="Aves S.J."/>
            <person name="Xiang Z."/>
            <person name="Hunt C."/>
            <person name="Moore K."/>
            <person name="Hurst S.M."/>
            <person name="Lucas M."/>
            <person name="Rochet M."/>
            <person name="Gaillardin C."/>
            <person name="Tallada V.A."/>
            <person name="Garzon A."/>
            <person name="Thode G."/>
            <person name="Daga R.R."/>
            <person name="Cruzado L."/>
            <person name="Jimenez J."/>
            <person name="Sanchez M."/>
            <person name="del Rey F."/>
            <person name="Benito J."/>
            <person name="Dominguez A."/>
            <person name="Revuelta J.L."/>
            <person name="Moreno S."/>
            <person name="Armstrong J."/>
            <person name="Forsburg S.L."/>
            <person name="Cerutti L."/>
            <person name="Lowe T."/>
            <person name="McCombie W.R."/>
            <person name="Paulsen I."/>
            <person name="Potashkin J."/>
            <person name="Shpakovski G.V."/>
            <person name="Ussery D."/>
            <person name="Barrell B.G."/>
            <person name="Nurse P."/>
        </authorList>
    </citation>
    <scope>NUCLEOTIDE SEQUENCE [LARGE SCALE GENOMIC DNA]</scope>
    <source>
        <strain>972 / ATCC 24843</strain>
    </source>
</reference>
<feature type="chain" id="PRO_0000116601" description="Uncharacterized protein C1F12.04c">
    <location>
        <begin position="1"/>
        <end position="191"/>
    </location>
</feature>
<organism>
    <name type="scientific">Schizosaccharomyces pombe (strain 972 / ATCC 24843)</name>
    <name type="common">Fission yeast</name>
    <dbReference type="NCBI Taxonomy" id="284812"/>
    <lineage>
        <taxon>Eukaryota</taxon>
        <taxon>Fungi</taxon>
        <taxon>Dikarya</taxon>
        <taxon>Ascomycota</taxon>
        <taxon>Taphrinomycotina</taxon>
        <taxon>Schizosaccharomycetes</taxon>
        <taxon>Schizosaccharomycetales</taxon>
        <taxon>Schizosaccharomycetaceae</taxon>
        <taxon>Schizosaccharomyces</taxon>
    </lineage>
</organism>
<protein>
    <recommendedName>
        <fullName>Uncharacterized protein C1F12.04c</fullName>
    </recommendedName>
</protein>
<keyword id="KW-1185">Reference proteome</keyword>
<sequence length="191" mass="21549">MSYMHSLNLMLQNPSGIDKIAAILVNVARLDPASSKSTAQLVSMLNEFRCILRLPGLYKLIVNFRKDSSPETYMSNAINIGYYVTEGLAFLGGKQIISISKPLEDKLWLWSSRFWLLDTLLTIYQLLREKTEDEKEHQLDLASNLASLPLCIHWSVENGAGLHKHQIGVLGLFSAIVQTRKLILSLHNKRA</sequence>
<name>YDA4_SCHPO</name>
<dbReference type="EMBL" id="CU329670">
    <property type="protein sequence ID" value="CAA93808.1"/>
    <property type="molecule type" value="Genomic_DNA"/>
</dbReference>
<dbReference type="PIR" id="T38062">
    <property type="entry name" value="S67447"/>
</dbReference>
<dbReference type="RefSeq" id="NP_594330.1">
    <property type="nucleotide sequence ID" value="NM_001019751.2"/>
</dbReference>
<dbReference type="SMR" id="Q10346"/>
<dbReference type="BioGRID" id="278958">
    <property type="interactions" value="21"/>
</dbReference>
<dbReference type="STRING" id="284812.Q10346"/>
<dbReference type="iPTMnet" id="Q10346"/>
<dbReference type="PaxDb" id="4896-SPAC1F12.04c.1"/>
<dbReference type="EnsemblFungi" id="SPAC1F12.04c.1">
    <property type="protein sequence ID" value="SPAC1F12.04c.1:pep"/>
    <property type="gene ID" value="SPAC1F12.04c"/>
</dbReference>
<dbReference type="KEGG" id="spo:2542499"/>
<dbReference type="PomBase" id="SPAC1F12.04c"/>
<dbReference type="VEuPathDB" id="FungiDB:SPAC1F12.04c"/>
<dbReference type="eggNOG" id="ENOG502RS06">
    <property type="taxonomic scope" value="Eukaryota"/>
</dbReference>
<dbReference type="HOGENOM" id="CLU_1422182_0_0_1"/>
<dbReference type="InParanoid" id="Q10346"/>
<dbReference type="OMA" id="EFRCILR"/>
<dbReference type="PRO" id="PR:Q10346"/>
<dbReference type="Proteomes" id="UP000002485">
    <property type="component" value="Chromosome I"/>
</dbReference>
<dbReference type="GO" id="GO:0005829">
    <property type="term" value="C:cytosol"/>
    <property type="evidence" value="ECO:0007005"/>
    <property type="project" value="PomBase"/>
</dbReference>
<dbReference type="GO" id="GO:0016559">
    <property type="term" value="P:peroxisome fission"/>
    <property type="evidence" value="ECO:0000266"/>
    <property type="project" value="PomBase"/>
</dbReference>
<dbReference type="PANTHER" id="PTHR12652:SF25">
    <property type="entry name" value="MICROBODY (PEROXISOME) PROLIFERATION PROTEIN PEROXIN 11C (EUROFUNG)"/>
    <property type="match status" value="1"/>
</dbReference>
<dbReference type="PANTHER" id="PTHR12652">
    <property type="entry name" value="PEROXISOMAL BIOGENESIS FACTOR 11"/>
    <property type="match status" value="1"/>
</dbReference>